<sequence>MAAQLQYQGTGRRKNAVARVRLIPGEGKVTINKRELAEYFGKKTLEMIVQQPFGVTDTAGKYDVVALAHGGGTTGQAGALRLGIARALLKADPSLRPALKRAGFLTRDPRMKERRKYGLKKARKAPQFSKR</sequence>
<name>RS9_DESHY</name>
<accession>Q24ZM5</accession>
<dbReference type="EMBL" id="AP008230">
    <property type="protein sequence ID" value="BAE82517.1"/>
    <property type="molecule type" value="Genomic_DNA"/>
</dbReference>
<dbReference type="RefSeq" id="WP_005814701.1">
    <property type="nucleotide sequence ID" value="NC_007907.1"/>
</dbReference>
<dbReference type="SMR" id="Q24ZM5"/>
<dbReference type="STRING" id="138119.DSY0728"/>
<dbReference type="KEGG" id="dsy:DSY0728"/>
<dbReference type="eggNOG" id="COG0103">
    <property type="taxonomic scope" value="Bacteria"/>
</dbReference>
<dbReference type="HOGENOM" id="CLU_046483_2_1_9"/>
<dbReference type="Proteomes" id="UP000001946">
    <property type="component" value="Chromosome"/>
</dbReference>
<dbReference type="GO" id="GO:0022627">
    <property type="term" value="C:cytosolic small ribosomal subunit"/>
    <property type="evidence" value="ECO:0007669"/>
    <property type="project" value="TreeGrafter"/>
</dbReference>
<dbReference type="GO" id="GO:0003723">
    <property type="term" value="F:RNA binding"/>
    <property type="evidence" value="ECO:0007669"/>
    <property type="project" value="TreeGrafter"/>
</dbReference>
<dbReference type="GO" id="GO:0003735">
    <property type="term" value="F:structural constituent of ribosome"/>
    <property type="evidence" value="ECO:0007669"/>
    <property type="project" value="InterPro"/>
</dbReference>
<dbReference type="GO" id="GO:0006412">
    <property type="term" value="P:translation"/>
    <property type="evidence" value="ECO:0007669"/>
    <property type="project" value="UniProtKB-UniRule"/>
</dbReference>
<dbReference type="FunFam" id="3.30.230.10:FF:000001">
    <property type="entry name" value="30S ribosomal protein S9"/>
    <property type="match status" value="1"/>
</dbReference>
<dbReference type="Gene3D" id="3.30.230.10">
    <property type="match status" value="1"/>
</dbReference>
<dbReference type="HAMAP" id="MF_00532_B">
    <property type="entry name" value="Ribosomal_uS9_B"/>
    <property type="match status" value="1"/>
</dbReference>
<dbReference type="InterPro" id="IPR020568">
    <property type="entry name" value="Ribosomal_Su5_D2-typ_SF"/>
</dbReference>
<dbReference type="InterPro" id="IPR000754">
    <property type="entry name" value="Ribosomal_uS9"/>
</dbReference>
<dbReference type="InterPro" id="IPR023035">
    <property type="entry name" value="Ribosomal_uS9_bac/plastid"/>
</dbReference>
<dbReference type="InterPro" id="IPR020574">
    <property type="entry name" value="Ribosomal_uS9_CS"/>
</dbReference>
<dbReference type="InterPro" id="IPR014721">
    <property type="entry name" value="Ribsml_uS5_D2-typ_fold_subgr"/>
</dbReference>
<dbReference type="NCBIfam" id="NF001099">
    <property type="entry name" value="PRK00132.1"/>
    <property type="match status" value="1"/>
</dbReference>
<dbReference type="PANTHER" id="PTHR21569">
    <property type="entry name" value="RIBOSOMAL PROTEIN S9"/>
    <property type="match status" value="1"/>
</dbReference>
<dbReference type="PANTHER" id="PTHR21569:SF1">
    <property type="entry name" value="SMALL RIBOSOMAL SUBUNIT PROTEIN US9M"/>
    <property type="match status" value="1"/>
</dbReference>
<dbReference type="Pfam" id="PF00380">
    <property type="entry name" value="Ribosomal_S9"/>
    <property type="match status" value="1"/>
</dbReference>
<dbReference type="SUPFAM" id="SSF54211">
    <property type="entry name" value="Ribosomal protein S5 domain 2-like"/>
    <property type="match status" value="1"/>
</dbReference>
<dbReference type="PROSITE" id="PS00360">
    <property type="entry name" value="RIBOSOMAL_S9"/>
    <property type="match status" value="1"/>
</dbReference>
<organism>
    <name type="scientific">Desulfitobacterium hafniense (strain Y51)</name>
    <dbReference type="NCBI Taxonomy" id="138119"/>
    <lineage>
        <taxon>Bacteria</taxon>
        <taxon>Bacillati</taxon>
        <taxon>Bacillota</taxon>
        <taxon>Clostridia</taxon>
        <taxon>Eubacteriales</taxon>
        <taxon>Desulfitobacteriaceae</taxon>
        <taxon>Desulfitobacterium</taxon>
    </lineage>
</organism>
<reference key="1">
    <citation type="journal article" date="2006" name="J. Bacteriol.">
        <title>Complete genome sequence of the dehalorespiring bacterium Desulfitobacterium hafniense Y51 and comparison with Dehalococcoides ethenogenes 195.</title>
        <authorList>
            <person name="Nonaka H."/>
            <person name="Keresztes G."/>
            <person name="Shinoda Y."/>
            <person name="Ikenaga Y."/>
            <person name="Abe M."/>
            <person name="Naito K."/>
            <person name="Inatomi K."/>
            <person name="Furukawa K."/>
            <person name="Inui M."/>
            <person name="Yukawa H."/>
        </authorList>
    </citation>
    <scope>NUCLEOTIDE SEQUENCE [LARGE SCALE GENOMIC DNA]</scope>
    <source>
        <strain>Y51</strain>
    </source>
</reference>
<evidence type="ECO:0000255" key="1">
    <source>
        <dbReference type="HAMAP-Rule" id="MF_00532"/>
    </source>
</evidence>
<evidence type="ECO:0000256" key="2">
    <source>
        <dbReference type="SAM" id="MobiDB-lite"/>
    </source>
</evidence>
<evidence type="ECO:0000305" key="3"/>
<keyword id="KW-1185">Reference proteome</keyword>
<keyword id="KW-0687">Ribonucleoprotein</keyword>
<keyword id="KW-0689">Ribosomal protein</keyword>
<protein>
    <recommendedName>
        <fullName evidence="1">Small ribosomal subunit protein uS9</fullName>
    </recommendedName>
    <alternativeName>
        <fullName evidence="3">30S ribosomal protein S9</fullName>
    </alternativeName>
</protein>
<gene>
    <name evidence="1" type="primary">rpsI</name>
    <name type="ordered locus">DSY0728</name>
</gene>
<comment type="similarity">
    <text evidence="1">Belongs to the universal ribosomal protein uS9 family.</text>
</comment>
<feature type="chain" id="PRO_1000051216" description="Small ribosomal subunit protein uS9">
    <location>
        <begin position="1"/>
        <end position="131"/>
    </location>
</feature>
<feature type="region of interest" description="Disordered" evidence="2">
    <location>
        <begin position="102"/>
        <end position="131"/>
    </location>
</feature>
<feature type="compositionally biased region" description="Basic residues" evidence="2">
    <location>
        <begin position="112"/>
        <end position="131"/>
    </location>
</feature>
<proteinExistence type="inferred from homology"/>